<proteinExistence type="inferred from homology"/>
<reference key="1">
    <citation type="journal article" date="2001" name="Proc. Natl. Acad. Sci. U.S.A.">
        <title>Complete genome sequence of an M1 strain of Streptococcus pyogenes.</title>
        <authorList>
            <person name="Ferretti J.J."/>
            <person name="McShan W.M."/>
            <person name="Ajdic D.J."/>
            <person name="Savic D.J."/>
            <person name="Savic G."/>
            <person name="Lyon K."/>
            <person name="Primeaux C."/>
            <person name="Sezate S."/>
            <person name="Suvorov A.N."/>
            <person name="Kenton S."/>
            <person name="Lai H.S."/>
            <person name="Lin S.P."/>
            <person name="Qian Y."/>
            <person name="Jia H.G."/>
            <person name="Najar F.Z."/>
            <person name="Ren Q."/>
            <person name="Zhu H."/>
            <person name="Song L."/>
            <person name="White J."/>
            <person name="Yuan X."/>
            <person name="Clifton S.W."/>
            <person name="Roe B.A."/>
            <person name="McLaughlin R.E."/>
        </authorList>
    </citation>
    <scope>NUCLEOTIDE SEQUENCE [LARGE SCALE GENOMIC DNA]</scope>
    <source>
        <strain>ATCC 700294 / SF370 / Serotype M1</strain>
    </source>
</reference>
<reference key="2">
    <citation type="journal article" date="2005" name="J. Infect. Dis.">
        <title>Evolutionary origin and emergence of a highly successful clone of serotype M1 group A Streptococcus involved multiple horizontal gene transfer events.</title>
        <authorList>
            <person name="Sumby P."/>
            <person name="Porcella S.F."/>
            <person name="Madrigal A.G."/>
            <person name="Barbian K.D."/>
            <person name="Virtaneva K."/>
            <person name="Ricklefs S.M."/>
            <person name="Sturdevant D.E."/>
            <person name="Graham M.R."/>
            <person name="Vuopio-Varkila J."/>
            <person name="Hoe N.P."/>
            <person name="Musser J.M."/>
        </authorList>
    </citation>
    <scope>NUCLEOTIDE SEQUENCE [LARGE SCALE GENOMIC DNA]</scope>
    <source>
        <strain>ATCC BAA-947 / MGAS5005 / Serotype M1</strain>
    </source>
</reference>
<sequence length="178" mass="19689">MDSQGPIILEKSIKIEEVIKIANTSIIDIVTKTVTPEIKAPYELVDVEYDKMGSDYILSILVDKEGGITVEDTSDLTNIISPLLDTIDPDPFPNQYMLEVSSPGLERPLKTADSLKAAVGSYINVSLYQAIDKVKVFQGDLLAFDGETLTIDYLDKTRHKIVNIPYQAVAKVRMAVKL</sequence>
<protein>
    <recommendedName>
        <fullName evidence="1">Ribosome maturation factor RimP</fullName>
    </recommendedName>
</protein>
<feature type="chain" id="PRO_0000181936" description="Ribosome maturation factor RimP">
    <location>
        <begin position="1"/>
        <end position="178"/>
    </location>
</feature>
<name>RIMP_STRP1</name>
<gene>
    <name evidence="1" type="primary">rimP</name>
    <name type="ordered locus">SPy_1725</name>
    <name type="ordered locus">M5005_Spy1413</name>
</gene>
<keyword id="KW-0963">Cytoplasm</keyword>
<keyword id="KW-1185">Reference proteome</keyword>
<keyword id="KW-0690">Ribosome biogenesis</keyword>
<accession>P59819</accession>
<accession>Q48X94</accession>
<accession>Q99YF7</accession>
<organism>
    <name type="scientific">Streptococcus pyogenes serotype M1</name>
    <dbReference type="NCBI Taxonomy" id="301447"/>
    <lineage>
        <taxon>Bacteria</taxon>
        <taxon>Bacillati</taxon>
        <taxon>Bacillota</taxon>
        <taxon>Bacilli</taxon>
        <taxon>Lactobacillales</taxon>
        <taxon>Streptococcaceae</taxon>
        <taxon>Streptococcus</taxon>
    </lineage>
</organism>
<dbReference type="EMBL" id="AE004092">
    <property type="protein sequence ID" value="AAK34470.1"/>
    <property type="status" value="ALT_INIT"/>
    <property type="molecule type" value="Genomic_DNA"/>
</dbReference>
<dbReference type="EMBL" id="CP000017">
    <property type="protein sequence ID" value="AAZ52031.1"/>
    <property type="molecule type" value="Genomic_DNA"/>
</dbReference>
<dbReference type="RefSeq" id="NP_269749.1">
    <property type="nucleotide sequence ID" value="NC_002737.2"/>
</dbReference>
<dbReference type="SMR" id="P59819"/>
<dbReference type="PaxDb" id="1314-HKU360_01466"/>
<dbReference type="KEGG" id="spy:SPy_1725"/>
<dbReference type="KEGG" id="spz:M5005_Spy1413"/>
<dbReference type="PATRIC" id="fig|160490.10.peg.1500"/>
<dbReference type="HOGENOM" id="CLU_070525_2_0_9"/>
<dbReference type="OMA" id="YIHVSLY"/>
<dbReference type="Proteomes" id="UP000000750">
    <property type="component" value="Chromosome"/>
</dbReference>
<dbReference type="GO" id="GO:0005829">
    <property type="term" value="C:cytosol"/>
    <property type="evidence" value="ECO:0007669"/>
    <property type="project" value="TreeGrafter"/>
</dbReference>
<dbReference type="GO" id="GO:0000028">
    <property type="term" value="P:ribosomal small subunit assembly"/>
    <property type="evidence" value="ECO:0007669"/>
    <property type="project" value="TreeGrafter"/>
</dbReference>
<dbReference type="GO" id="GO:0006412">
    <property type="term" value="P:translation"/>
    <property type="evidence" value="ECO:0007669"/>
    <property type="project" value="TreeGrafter"/>
</dbReference>
<dbReference type="CDD" id="cd01734">
    <property type="entry name" value="YlxS_C"/>
    <property type="match status" value="1"/>
</dbReference>
<dbReference type="Gene3D" id="2.30.30.180">
    <property type="entry name" value="Ribosome maturation factor RimP, C-terminal domain"/>
    <property type="match status" value="1"/>
</dbReference>
<dbReference type="Gene3D" id="3.30.300.70">
    <property type="entry name" value="RimP-like superfamily, N-terminal"/>
    <property type="match status" value="1"/>
</dbReference>
<dbReference type="HAMAP" id="MF_01077">
    <property type="entry name" value="RimP"/>
    <property type="match status" value="1"/>
</dbReference>
<dbReference type="InterPro" id="IPR003728">
    <property type="entry name" value="Ribosome_maturation_RimP"/>
</dbReference>
<dbReference type="InterPro" id="IPR028998">
    <property type="entry name" value="RimP_C"/>
</dbReference>
<dbReference type="InterPro" id="IPR036847">
    <property type="entry name" value="RimP_C_sf"/>
</dbReference>
<dbReference type="InterPro" id="IPR028989">
    <property type="entry name" value="RimP_N"/>
</dbReference>
<dbReference type="InterPro" id="IPR035956">
    <property type="entry name" value="RimP_N_sf"/>
</dbReference>
<dbReference type="NCBIfam" id="NF000928">
    <property type="entry name" value="PRK00092.1-2"/>
    <property type="match status" value="1"/>
</dbReference>
<dbReference type="PANTHER" id="PTHR33867">
    <property type="entry name" value="RIBOSOME MATURATION FACTOR RIMP"/>
    <property type="match status" value="1"/>
</dbReference>
<dbReference type="PANTHER" id="PTHR33867:SF1">
    <property type="entry name" value="RIBOSOME MATURATION FACTOR RIMP"/>
    <property type="match status" value="1"/>
</dbReference>
<dbReference type="Pfam" id="PF17384">
    <property type="entry name" value="DUF150_C"/>
    <property type="match status" value="1"/>
</dbReference>
<dbReference type="Pfam" id="PF02576">
    <property type="entry name" value="RimP_N"/>
    <property type="match status" value="1"/>
</dbReference>
<dbReference type="SUPFAM" id="SSF74942">
    <property type="entry name" value="YhbC-like, C-terminal domain"/>
    <property type="match status" value="1"/>
</dbReference>
<dbReference type="SUPFAM" id="SSF75420">
    <property type="entry name" value="YhbC-like, N-terminal domain"/>
    <property type="match status" value="1"/>
</dbReference>
<evidence type="ECO:0000255" key="1">
    <source>
        <dbReference type="HAMAP-Rule" id="MF_01077"/>
    </source>
</evidence>
<evidence type="ECO:0000305" key="2"/>
<comment type="function">
    <text evidence="1">Required for maturation of 30S ribosomal subunits.</text>
</comment>
<comment type="subcellular location">
    <subcellularLocation>
        <location evidence="1">Cytoplasm</location>
    </subcellularLocation>
</comment>
<comment type="similarity">
    <text evidence="1">Belongs to the RimP family.</text>
</comment>
<comment type="sequence caution" evidence="2">
    <conflict type="erroneous initiation">
        <sequence resource="EMBL-CDS" id="AAK34470"/>
    </conflict>
</comment>